<protein>
    <recommendedName>
        <fullName>TOX high mobility group box family member 4</fullName>
    </recommendedName>
</protein>
<dbReference type="EMBL" id="CR860582">
    <property type="protein sequence ID" value="CAH92707.1"/>
    <property type="molecule type" value="mRNA"/>
</dbReference>
<dbReference type="EMBL" id="CR861113">
    <property type="protein sequence ID" value="CAH93190.1"/>
    <property type="molecule type" value="mRNA"/>
</dbReference>
<dbReference type="RefSeq" id="NP_001126876.1">
    <property type="nucleotide sequence ID" value="NM_001133404.1"/>
</dbReference>
<dbReference type="RefSeq" id="NP_001128875.1">
    <property type="nucleotide sequence ID" value="NM_001135403.1"/>
</dbReference>
<dbReference type="SMR" id="Q5R6A9"/>
<dbReference type="FunCoup" id="Q5R6A9">
    <property type="interactions" value="3234"/>
</dbReference>
<dbReference type="STRING" id="9601.ENSPPYP00000006367"/>
<dbReference type="Ensembl" id="ENSPPYT00000006622.3">
    <property type="protein sequence ID" value="ENSPPYP00000006367.3"/>
    <property type="gene ID" value="ENSPPYG00000005598.3"/>
</dbReference>
<dbReference type="GeneID" id="100189804"/>
<dbReference type="KEGG" id="pon:100189804"/>
<dbReference type="CTD" id="9878"/>
<dbReference type="eggNOG" id="KOG0381">
    <property type="taxonomic scope" value="Eukaryota"/>
</dbReference>
<dbReference type="GeneTree" id="ENSGT00940000154888"/>
<dbReference type="InParanoid" id="Q5R6A9"/>
<dbReference type="OMA" id="FLSGAEX"/>
<dbReference type="Proteomes" id="UP000001595">
    <property type="component" value="Chromosome 14"/>
</dbReference>
<dbReference type="GO" id="GO:0000785">
    <property type="term" value="C:chromatin"/>
    <property type="evidence" value="ECO:0007669"/>
    <property type="project" value="Ensembl"/>
</dbReference>
<dbReference type="GO" id="GO:0000781">
    <property type="term" value="C:chromosome, telomeric region"/>
    <property type="evidence" value="ECO:0007669"/>
    <property type="project" value="Ensembl"/>
</dbReference>
<dbReference type="GO" id="GO:0005634">
    <property type="term" value="C:nucleus"/>
    <property type="evidence" value="ECO:0007669"/>
    <property type="project" value="UniProtKB-SubCell"/>
</dbReference>
<dbReference type="GO" id="GO:0072357">
    <property type="term" value="C:PTW/PP1 phosphatase complex"/>
    <property type="evidence" value="ECO:0000250"/>
    <property type="project" value="UniProtKB"/>
</dbReference>
<dbReference type="GO" id="GO:0031490">
    <property type="term" value="F:chromatin DNA binding"/>
    <property type="evidence" value="ECO:0007669"/>
    <property type="project" value="TreeGrafter"/>
</dbReference>
<dbReference type="GO" id="GO:0032968">
    <property type="term" value="P:positive regulation of transcription elongation by RNA polymerase II"/>
    <property type="evidence" value="ECO:0000250"/>
    <property type="project" value="UniProtKB"/>
</dbReference>
<dbReference type="GO" id="GO:0001111">
    <property type="term" value="P:RNA polymerase II promoter clearance"/>
    <property type="evidence" value="ECO:0000250"/>
    <property type="project" value="UniProtKB"/>
</dbReference>
<dbReference type="CDD" id="cd21995">
    <property type="entry name" value="HMG-box_TOX-like"/>
    <property type="match status" value="1"/>
</dbReference>
<dbReference type="FunFam" id="1.10.30.10:FF:000005">
    <property type="entry name" value="TOX high mobility group box family member 3"/>
    <property type="match status" value="1"/>
</dbReference>
<dbReference type="Gene3D" id="1.10.30.10">
    <property type="entry name" value="High mobility group box domain"/>
    <property type="match status" value="1"/>
</dbReference>
<dbReference type="InterPro" id="IPR009071">
    <property type="entry name" value="HMG_box_dom"/>
</dbReference>
<dbReference type="InterPro" id="IPR036910">
    <property type="entry name" value="HMG_box_dom_sf"/>
</dbReference>
<dbReference type="InterPro" id="IPR051365">
    <property type="entry name" value="TOX_HMG-box_domain"/>
</dbReference>
<dbReference type="PANTHER" id="PTHR45781">
    <property type="entry name" value="AGAP000281-PA"/>
    <property type="match status" value="1"/>
</dbReference>
<dbReference type="PANTHER" id="PTHR45781:SF2">
    <property type="entry name" value="TOX HIGH MOBILITY GROUP BOX FAMILY MEMBER 4"/>
    <property type="match status" value="1"/>
</dbReference>
<dbReference type="Pfam" id="PF00505">
    <property type="entry name" value="HMG_box"/>
    <property type="match status" value="1"/>
</dbReference>
<dbReference type="PRINTS" id="PR00886">
    <property type="entry name" value="HIGHMOBLTY12"/>
</dbReference>
<dbReference type="SMART" id="SM00398">
    <property type="entry name" value="HMG"/>
    <property type="match status" value="1"/>
</dbReference>
<dbReference type="SUPFAM" id="SSF47095">
    <property type="entry name" value="HMG-box"/>
    <property type="match status" value="1"/>
</dbReference>
<dbReference type="PROSITE" id="PS50118">
    <property type="entry name" value="HMG_BOX_2"/>
    <property type="match status" value="1"/>
</dbReference>
<evidence type="ECO:0000250" key="1">
    <source>
        <dbReference type="UniProtKB" id="O94842"/>
    </source>
</evidence>
<evidence type="ECO:0000250" key="2">
    <source>
        <dbReference type="UniProtKB" id="Q8BU11"/>
    </source>
</evidence>
<evidence type="ECO:0000255" key="3"/>
<evidence type="ECO:0000255" key="4">
    <source>
        <dbReference type="PROSITE-ProRule" id="PRU00267"/>
    </source>
</evidence>
<evidence type="ECO:0000256" key="5">
    <source>
        <dbReference type="SAM" id="MobiDB-lite"/>
    </source>
</evidence>
<evidence type="ECO:0000305" key="6"/>
<feature type="chain" id="PRO_0000364349" description="TOX high mobility group box family member 4">
    <location>
        <begin position="1"/>
        <end position="621"/>
    </location>
</feature>
<feature type="DNA-binding region" description="HMG box" evidence="4">
    <location>
        <begin position="223"/>
        <end position="291"/>
    </location>
</feature>
<feature type="region of interest" description="Disordered" evidence="5">
    <location>
        <begin position="153"/>
        <end position="227"/>
    </location>
</feature>
<feature type="region of interest" description="Disordered" evidence="5">
    <location>
        <begin position="305"/>
        <end position="333"/>
    </location>
</feature>
<feature type="region of interest" description="Disordered" evidence="5">
    <location>
        <begin position="510"/>
        <end position="529"/>
    </location>
</feature>
<feature type="short sequence motif" description="Nuclear localization signal" evidence="3">
    <location>
        <begin position="213"/>
        <end position="218"/>
    </location>
</feature>
<feature type="compositionally biased region" description="Basic and acidic residues" evidence="5">
    <location>
        <begin position="183"/>
        <end position="193"/>
    </location>
</feature>
<feature type="compositionally biased region" description="Basic residues" evidence="5">
    <location>
        <begin position="208"/>
        <end position="218"/>
    </location>
</feature>
<feature type="compositionally biased region" description="Pro residues" evidence="5">
    <location>
        <begin position="307"/>
        <end position="319"/>
    </location>
</feature>
<feature type="compositionally biased region" description="Low complexity" evidence="5">
    <location>
        <begin position="320"/>
        <end position="333"/>
    </location>
</feature>
<feature type="modified residue" description="Phosphothreonine" evidence="2">
    <location>
        <position position="176"/>
    </location>
</feature>
<feature type="modified residue" description="Phosphoserine" evidence="1">
    <location>
        <position position="178"/>
    </location>
</feature>
<feature type="modified residue" description="Phosphoserine" evidence="1">
    <location>
        <position position="181"/>
    </location>
</feature>
<feature type="modified residue" description="Phosphoserine" evidence="1">
    <location>
        <position position="182"/>
    </location>
</feature>
<feature type="modified residue" description="Phosphothreonine" evidence="1">
    <location>
        <position position="313"/>
    </location>
</feature>
<feature type="modified residue" description="Phosphoserine" evidence="1">
    <location>
        <position position="315"/>
    </location>
</feature>
<feature type="modified residue" description="Asymmetric dimethylarginine" evidence="1">
    <location>
        <position position="481"/>
    </location>
</feature>
<feature type="modified residue" description="Phosphoserine" evidence="1">
    <location>
        <position position="533"/>
    </location>
</feature>
<feature type="modified residue" description="Phosphoserine" evidence="1">
    <location>
        <position position="550"/>
    </location>
</feature>
<feature type="modified residue" description="Phosphoserine" evidence="1">
    <location>
        <position position="552"/>
    </location>
</feature>
<feature type="modified residue" description="Phosphoserine" evidence="1">
    <location>
        <position position="560"/>
    </location>
</feature>
<feature type="modified residue" description="Phosphoserine" evidence="1">
    <location>
        <position position="562"/>
    </location>
</feature>
<feature type="modified residue" description="Phosphoserine" evidence="1">
    <location>
        <position position="567"/>
    </location>
</feature>
<feature type="sequence conflict" description="In Ref. 1; CAH93190." evidence="6" ref="1">
    <original>L</original>
    <variation>P</variation>
    <location>
        <position position="157"/>
    </location>
</feature>
<feature type="sequence conflict" description="In Ref. 1; CAH93190." evidence="6" ref="1">
    <original>T</original>
    <variation>A</variation>
    <location>
        <position position="161"/>
    </location>
</feature>
<feature type="sequence conflict" description="In Ref. 1; CAH92707." evidence="6" ref="1">
    <original>R</original>
    <variation>E</variation>
    <location>
        <position position="215"/>
    </location>
</feature>
<feature type="sequence conflict" description="In Ref. 1; CAH93190." evidence="6" ref="1">
    <original>Q</original>
    <variation>R</variation>
    <location>
        <position position="362"/>
    </location>
</feature>
<feature type="sequence conflict" description="In Ref. 1; CAH92707." evidence="6" ref="1">
    <original>L</original>
    <variation>P</variation>
    <location>
        <position position="402"/>
    </location>
</feature>
<gene>
    <name type="primary">TOX4</name>
</gene>
<organism>
    <name type="scientific">Pongo abelii</name>
    <name type="common">Sumatran orangutan</name>
    <name type="synonym">Pongo pygmaeus abelii</name>
    <dbReference type="NCBI Taxonomy" id="9601"/>
    <lineage>
        <taxon>Eukaryota</taxon>
        <taxon>Metazoa</taxon>
        <taxon>Chordata</taxon>
        <taxon>Craniata</taxon>
        <taxon>Vertebrata</taxon>
        <taxon>Euteleostomi</taxon>
        <taxon>Mammalia</taxon>
        <taxon>Eutheria</taxon>
        <taxon>Euarchontoglires</taxon>
        <taxon>Primates</taxon>
        <taxon>Haplorrhini</taxon>
        <taxon>Catarrhini</taxon>
        <taxon>Hominidae</taxon>
        <taxon>Pongo</taxon>
    </lineage>
</organism>
<sequence>MEFPGGNDNYLTITGPSHPFLSGAETFHTPSLGDEEFEIPPISLDSDPSLAVSDVVGHFDDLADPSSSQDGSFSAQYGVQTLDMPVGMTHGLMEQGGGLLSGGLTMDLDHSIGTQYSANPPVTIDVPMTDMTSGLMGHSQLTTIDQSELSSQLGLSLGGGTILPPAQSPEDRLSTTPSPTSSLHEDGVEDFRRQLPSQKTVVVEAGKKQKAPKKRKKKDPNEPQKPVSAYALFFRDTQAAIKGQNPNATFGEVSKIVASMWDSLGEEQKQVYKRKTEAAKKEYLKALAAYKDNQECQATVETVELDPAPPSQTPSPPPMATVDPASPAPASIEPPALSPSIVVNSTLSSYVANQASSGAGGQPNITKLIITKQMLPSSITMSQGGMVTVIPATVVTSRGLQLGQTSTATIQPSQQAQIVTRSVLQAAAAAAAAASMQLPPPRLQPPPLQQMPQPPTQQQVTILQQPPPLQAMQQPPPQKVRINLQQQPPPLQIKSVPLPTLKMQTTLVPPTVESSPERPMNNSPEAHTVEATSPETICEMITDVVPEVESPSQMDVELVSGSPVALSPQPRCVRSGCENPPIVSKDWDNEYCSNECVVKHCRDVFLAWVASRNSNTVVFVK</sequence>
<keyword id="KW-0158">Chromosome</keyword>
<keyword id="KW-0238">DNA-binding</keyword>
<keyword id="KW-0488">Methylation</keyword>
<keyword id="KW-0539">Nucleus</keyword>
<keyword id="KW-0597">Phosphoprotein</keyword>
<keyword id="KW-1185">Reference proteome</keyword>
<keyword id="KW-0804">Transcription</keyword>
<keyword id="KW-0805">Transcription regulation</keyword>
<comment type="function">
    <text evidence="1 2">Transcription factor that modulates cell fate reprogramming from the somatic state to the pluripotent and neuronal fate. In liver, controls the expression of hormone-regulated gluconeogenic genes such as G6PC1 and PCK1. This regulation is independent of the insulin receptor activation. Also acts as a regulatory component of protein phosphatase 1 (PP1) complexes. Component of the PNUTS-PP1 protein phosphatase complex, a PP1 complex that regulates RNA polymerase II transcription pause-release (By similarity). PNUTS-PP1 also plays a role in the control of chromatin structure and cell cycle progression during the transition from mitosis into interphase (By similarity).</text>
</comment>
<comment type="activity regulation">
    <text evidence="2">In liver, recruited to target gene promoters following treatment with dexamethasone and cAMP. Binding is decreased in presence of insulin.</text>
</comment>
<comment type="subunit">
    <text evidence="1 2">Component of the PNUTS-PP1 phosphatase complex, composed of PPP1R10/PNUTS, TOX4, WDR82 and PPP1CA or PPP1CB or PPP1CC. Interacts with PPP1R10/PNUTS (By similarity). Interacts with FOXO1 and CREB1 (increased by cAMP); FOXO1 and CREB1 are required for full induction of TOX4-dependent activity and the interactions are inhibited by insulin (By similarity).</text>
</comment>
<comment type="subcellular location">
    <subcellularLocation>
        <location evidence="2">Nucleus</location>
    </subcellularLocation>
    <subcellularLocation>
        <location evidence="2">Chromosome</location>
    </subcellularLocation>
    <text evidence="2">Associated with chromatin; colocalizes with RNA polymerase II (Pol II) on chromatin.</text>
</comment>
<reference key="1">
    <citation type="submission" date="2004-11" db="EMBL/GenBank/DDBJ databases">
        <authorList>
            <consortium name="The German cDNA consortium"/>
        </authorList>
    </citation>
    <scope>NUCLEOTIDE SEQUENCE [LARGE SCALE MRNA]</scope>
    <source>
        <tissue>Brain cortex</tissue>
    </source>
</reference>
<proteinExistence type="evidence at transcript level"/>
<name>TOX4_PONAB</name>
<accession>Q5R6A9</accession>
<accession>Q5R4X6</accession>